<comment type="function">
    <text evidence="1">Seems to be involved in the cross-linking of microtubules and microfilaments (By similarity). Regulates microtubule dynamics and stability by interacting with microtubule plus-end tracking proteins, such as MAPRE1, to regulate microtubule growth along actin stress fibers (By similarity).</text>
</comment>
<comment type="subunit">
    <text evidence="5">Interacts with MAPRE1.</text>
</comment>
<comment type="subcellular location">
    <subcellularLocation>
        <location evidence="1">Cytoplasm</location>
        <location evidence="1">Cytoskeleton</location>
    </subcellularLocation>
    <subcellularLocation>
        <location evidence="1">Cytoplasm</location>
        <location evidence="1">Cytoskeleton</location>
        <location evidence="1">Stress fiber</location>
    </subcellularLocation>
    <text evidence="1">Colocalizes with the tips of microtubule plus ends.</text>
</comment>
<comment type="alternative products">
    <event type="alternative splicing"/>
    <isoform>
        <id>Q8JZP9-1</id>
        <name>1</name>
        <name>Beta</name>
        <sequence type="displayed"/>
    </isoform>
    <isoform>
        <id>Q8JZP9-2</id>
        <name>2</name>
        <name>Alpha</name>
        <sequence type="described" ref="VSP_015496"/>
    </isoform>
</comment>
<comment type="similarity">
    <text evidence="7">Belongs to the GAS2 family.</text>
</comment>
<keyword id="KW-0007">Acetylation</keyword>
<keyword id="KW-0025">Alternative splicing</keyword>
<keyword id="KW-0963">Cytoplasm</keyword>
<keyword id="KW-0206">Cytoskeleton</keyword>
<keyword id="KW-0488">Methylation</keyword>
<keyword id="KW-0597">Phosphoprotein</keyword>
<keyword id="KW-1185">Reference proteome</keyword>
<name>GA2L1_MOUSE</name>
<sequence>MANPVAGIAGSAAKSVRPFRSSEAYVEAMKEDLADWLNALYSLGLPGSGDGFLTGLATGTTLCQHANAVTEAARALAAARPTRGVAFQAHSVAPGSFMARDNVASFIGWCRAELGVPEVLMFETEDLVLRKNEKSVVLCLLEVARRGARLGLLAPRLVQFEQEIERELRATPQVSSVPAAEEDVTEIATVPGVPTRTPRMTPNDLRNLDELVREILGRCTCPDQFPMIKVSEGKYRVGDSSLLIFVRVLRSHVMVRVGGGWDTLEHYLDKHDPCRCSSSTHRLPQQRTGTFSPQRGSPTPSPRPGSPVPGSERRSSRPEVTPISLRGTKEGPETPLRPRDQLPPLPRSRRYSGDSDSSASSAQSGPMGARSDDSATGSRRERPSHRPTSCLPASPRRPTAPRSQSRDRLDRGRPRVAPGGRGAQLSTSSPARRTRSQSREEQAVLMVRRDRDGQHSWVARGRGGGGSGGSGRSTPQTPRALSPAAPRPSRGPSPGPELAATPASIFRTPLQLDPQQEQQLFRRLEEEFLANARALEAAASHTPMGSAPDPPAPDSAYCSSSSSSSSLSVLGGKCGQPGESGRTANGLPGPRSQALSSSSDEGSPYLAVGGALDATRSSLAGPEPSLTWARGRMDTQPDRKPSRIPTPRGPRRPSGPIELGAWHAQHSVTPRTEPDSSM</sequence>
<feature type="initiator methionine" description="Removed" evidence="1">
    <location>
        <position position="1"/>
    </location>
</feature>
<feature type="chain" id="PRO_0000190443" description="GAS2-like protein 1">
    <location>
        <begin position="2"/>
        <end position="678"/>
    </location>
</feature>
<feature type="domain" description="Calponin-homology (CH)" evidence="2">
    <location>
        <begin position="27"/>
        <end position="148"/>
    </location>
</feature>
<feature type="domain" description="GAR" evidence="3">
    <location>
        <begin position="203"/>
        <end position="275"/>
    </location>
</feature>
<feature type="region of interest" description="Disordered" evidence="4">
    <location>
        <begin position="276"/>
        <end position="524"/>
    </location>
</feature>
<feature type="region of interest" description="Disordered" evidence="4">
    <location>
        <begin position="538"/>
        <end position="678"/>
    </location>
</feature>
<feature type="compositionally biased region" description="Polar residues" evidence="4">
    <location>
        <begin position="276"/>
        <end position="291"/>
    </location>
</feature>
<feature type="compositionally biased region" description="Basic and acidic residues" evidence="4">
    <location>
        <begin position="327"/>
        <end position="340"/>
    </location>
</feature>
<feature type="compositionally biased region" description="Low complexity" evidence="4">
    <location>
        <begin position="354"/>
        <end position="365"/>
    </location>
</feature>
<feature type="compositionally biased region" description="Basic and acidic residues" evidence="4">
    <location>
        <begin position="370"/>
        <end position="381"/>
    </location>
</feature>
<feature type="compositionally biased region" description="Low complexity" evidence="4">
    <location>
        <begin position="392"/>
        <end position="403"/>
    </location>
</feature>
<feature type="compositionally biased region" description="Basic and acidic residues" evidence="4">
    <location>
        <begin position="404"/>
        <end position="413"/>
    </location>
</feature>
<feature type="compositionally biased region" description="Basic and acidic residues" evidence="4">
    <location>
        <begin position="437"/>
        <end position="454"/>
    </location>
</feature>
<feature type="compositionally biased region" description="Gly residues" evidence="4">
    <location>
        <begin position="461"/>
        <end position="471"/>
    </location>
</feature>
<feature type="compositionally biased region" description="Pro residues" evidence="4">
    <location>
        <begin position="485"/>
        <end position="495"/>
    </location>
</feature>
<feature type="compositionally biased region" description="Low complexity" evidence="4">
    <location>
        <begin position="509"/>
        <end position="519"/>
    </location>
</feature>
<feature type="compositionally biased region" description="Low complexity" evidence="4">
    <location>
        <begin position="554"/>
        <end position="568"/>
    </location>
</feature>
<feature type="compositionally biased region" description="Basic and acidic residues" evidence="4">
    <location>
        <begin position="631"/>
        <end position="641"/>
    </location>
</feature>
<feature type="compositionally biased region" description="Polar residues" evidence="4">
    <location>
        <begin position="666"/>
        <end position="678"/>
    </location>
</feature>
<feature type="modified residue" description="N-acetylalanine" evidence="1">
    <location>
        <position position="2"/>
    </location>
</feature>
<feature type="modified residue" description="Phosphoserine" evidence="8">
    <location>
        <position position="306"/>
    </location>
</feature>
<feature type="modified residue" description="Phosphoserine" evidence="1">
    <location>
        <position position="316"/>
    </location>
</feature>
<feature type="modified residue" description="Phosphothreonine" evidence="1">
    <location>
        <position position="334"/>
    </location>
</feature>
<feature type="modified residue" description="Phosphoserine" evidence="8">
    <location>
        <position position="352"/>
    </location>
</feature>
<feature type="modified residue" description="Phosphoserine" evidence="8">
    <location>
        <position position="355"/>
    </location>
</feature>
<feature type="modified residue" description="Phosphoserine" evidence="1">
    <location>
        <position position="394"/>
    </location>
</feature>
<feature type="modified residue" description="Phosphoserine" evidence="1">
    <location>
        <position position="436"/>
    </location>
</feature>
<feature type="modified residue" description="Phosphoserine" evidence="1">
    <location>
        <position position="438"/>
    </location>
</feature>
<feature type="modified residue" description="Phosphoserine" evidence="1">
    <location>
        <position position="482"/>
    </location>
</feature>
<feature type="modified residue" description="Phosphoserine" evidence="1">
    <location>
        <position position="489"/>
    </location>
</feature>
<feature type="modified residue" description="Omega-N-methylarginine" evidence="9">
    <location>
        <position position="490"/>
    </location>
</feature>
<feature type="modified residue" description="Phosphoserine" evidence="8">
    <location>
        <position position="493"/>
    </location>
</feature>
<feature type="modified residue" description="Phosphothreonine" evidence="1">
    <location>
        <position position="501"/>
    </location>
</feature>
<feature type="modified residue" description="Omega-N-methylarginine" evidence="9">
    <location>
        <position position="507"/>
    </location>
</feature>
<feature type="modified residue" description="Omega-N-methylarginine" evidence="9">
    <location>
        <position position="630"/>
    </location>
</feature>
<feature type="modified residue" description="Phosphoserine" evidence="8">
    <location>
        <position position="654"/>
    </location>
</feature>
<feature type="splice variant" id="VSP_015496" description="In isoform 2." evidence="6">
    <location>
        <begin position="338"/>
        <end position="678"/>
    </location>
</feature>
<evidence type="ECO:0000250" key="1">
    <source>
        <dbReference type="UniProtKB" id="Q99501"/>
    </source>
</evidence>
<evidence type="ECO:0000255" key="2">
    <source>
        <dbReference type="PROSITE-ProRule" id="PRU00044"/>
    </source>
</evidence>
<evidence type="ECO:0000255" key="3">
    <source>
        <dbReference type="PROSITE-ProRule" id="PRU00792"/>
    </source>
</evidence>
<evidence type="ECO:0000256" key="4">
    <source>
        <dbReference type="SAM" id="MobiDB-lite"/>
    </source>
</evidence>
<evidence type="ECO:0000269" key="5">
    <source>
    </source>
</evidence>
<evidence type="ECO:0000303" key="6">
    <source>
    </source>
</evidence>
<evidence type="ECO:0000305" key="7"/>
<evidence type="ECO:0007744" key="8">
    <source>
    </source>
</evidence>
<evidence type="ECO:0007744" key="9">
    <source>
    </source>
</evidence>
<protein>
    <recommendedName>
        <fullName>GAS2-like protein 1</fullName>
    </recommendedName>
    <alternativeName>
        <fullName>Growth arrest-specific protein 2-like 1</fullName>
    </alternativeName>
</protein>
<reference key="1">
    <citation type="journal article" date="2003" name="J. Cell Sci.">
        <title>Protein products of human Gas2-related genes on chromosomes 17 and 22 (hGAR17 and hGAR22) associate with both microfilaments and microtubules.</title>
        <authorList>
            <person name="Goriounov D."/>
            <person name="Leung C.L."/>
            <person name="Liem R.K."/>
        </authorList>
    </citation>
    <scope>NUCLEOTIDE SEQUENCE [MRNA] (ISOFORMS 1 AND 2)</scope>
    <source>
        <strain>C57BL/6J</strain>
        <tissue>Brain</tissue>
    </source>
</reference>
<reference key="2">
    <citation type="journal article" date="2009" name="PLoS Biol.">
        <title>Lineage-specific biology revealed by a finished genome assembly of the mouse.</title>
        <authorList>
            <person name="Church D.M."/>
            <person name="Goodstadt L."/>
            <person name="Hillier L.W."/>
            <person name="Zody M.C."/>
            <person name="Goldstein S."/>
            <person name="She X."/>
            <person name="Bult C.J."/>
            <person name="Agarwala R."/>
            <person name="Cherry J.L."/>
            <person name="DiCuccio M."/>
            <person name="Hlavina W."/>
            <person name="Kapustin Y."/>
            <person name="Meric P."/>
            <person name="Maglott D."/>
            <person name="Birtle Z."/>
            <person name="Marques A.C."/>
            <person name="Graves T."/>
            <person name="Zhou S."/>
            <person name="Teague B."/>
            <person name="Potamousis K."/>
            <person name="Churas C."/>
            <person name="Place M."/>
            <person name="Herschleb J."/>
            <person name="Runnheim R."/>
            <person name="Forrest D."/>
            <person name="Amos-Landgraf J."/>
            <person name="Schwartz D.C."/>
            <person name="Cheng Z."/>
            <person name="Lindblad-Toh K."/>
            <person name="Eichler E.E."/>
            <person name="Ponting C.P."/>
        </authorList>
    </citation>
    <scope>NUCLEOTIDE SEQUENCE [LARGE SCALE GENOMIC DNA]</scope>
    <source>
        <strain>C57BL/6J</strain>
    </source>
</reference>
<reference key="3">
    <citation type="journal article" date="2004" name="Genome Res.">
        <title>The status, quality, and expansion of the NIH full-length cDNA project: the Mammalian Gene Collection (MGC).</title>
        <authorList>
            <consortium name="The MGC Project Team"/>
        </authorList>
    </citation>
    <scope>NUCLEOTIDE SEQUENCE [LARGE SCALE MRNA] (ISOFORM 1)</scope>
    <source>
        <strain>FVB/N</strain>
        <tissue>Liver</tissue>
    </source>
</reference>
<reference key="4">
    <citation type="journal article" date="2010" name="Cell">
        <title>A tissue-specific atlas of mouse protein phosphorylation and expression.</title>
        <authorList>
            <person name="Huttlin E.L."/>
            <person name="Jedrychowski M.P."/>
            <person name="Elias J.E."/>
            <person name="Goswami T."/>
            <person name="Rad R."/>
            <person name="Beausoleil S.A."/>
            <person name="Villen J."/>
            <person name="Haas W."/>
            <person name="Sowa M.E."/>
            <person name="Gygi S.P."/>
        </authorList>
    </citation>
    <scope>PHOSPHORYLATION [LARGE SCALE ANALYSIS] AT SER-306; SER-352; SER-355; SER-493 AND SER-654</scope>
    <scope>IDENTIFICATION BY MASS SPECTROMETRY [LARGE SCALE ANALYSIS]</scope>
    <source>
        <tissue>Lung</tissue>
        <tissue>Testis</tissue>
    </source>
</reference>
<reference key="5">
    <citation type="journal article" date="2014" name="J. Cell Sci.">
        <title>GAS2-like proteins mediate communication between microtubules and actin through interactions with end-binding proteins.</title>
        <authorList>
            <person name="Stroud M.J."/>
            <person name="Nazgiewicz A."/>
            <person name="McKenzie E.A."/>
            <person name="Wang Y."/>
            <person name="Kammerer R.A."/>
            <person name="Ballestrem C."/>
        </authorList>
    </citation>
    <scope>INTERACTION WITH MAPRE1</scope>
</reference>
<reference key="6">
    <citation type="journal article" date="2014" name="Mol. Cell. Proteomics">
        <title>Immunoaffinity enrichment and mass spectrometry analysis of protein methylation.</title>
        <authorList>
            <person name="Guo A."/>
            <person name="Gu H."/>
            <person name="Zhou J."/>
            <person name="Mulhern D."/>
            <person name="Wang Y."/>
            <person name="Lee K.A."/>
            <person name="Yang V."/>
            <person name="Aguiar M."/>
            <person name="Kornhauser J."/>
            <person name="Jia X."/>
            <person name="Ren J."/>
            <person name="Beausoleil S.A."/>
            <person name="Silva J.C."/>
            <person name="Vemulapalli V."/>
            <person name="Bedford M.T."/>
            <person name="Comb M.J."/>
        </authorList>
    </citation>
    <scope>METHYLATION [LARGE SCALE ANALYSIS] AT ARG-490; ARG-507 AND ARG-630</scope>
    <scope>IDENTIFICATION BY MASS SPECTROMETRY [LARGE SCALE ANALYSIS]</scope>
    <source>
        <tissue>Brain</tissue>
        <tissue>Embryo</tissue>
    </source>
</reference>
<proteinExistence type="evidence at protein level"/>
<organism>
    <name type="scientific">Mus musculus</name>
    <name type="common">Mouse</name>
    <dbReference type="NCBI Taxonomy" id="10090"/>
    <lineage>
        <taxon>Eukaryota</taxon>
        <taxon>Metazoa</taxon>
        <taxon>Chordata</taxon>
        <taxon>Craniata</taxon>
        <taxon>Vertebrata</taxon>
        <taxon>Euteleostomi</taxon>
        <taxon>Mammalia</taxon>
        <taxon>Eutheria</taxon>
        <taxon>Euarchontoglires</taxon>
        <taxon>Glires</taxon>
        <taxon>Rodentia</taxon>
        <taxon>Myomorpha</taxon>
        <taxon>Muroidea</taxon>
        <taxon>Muridae</taxon>
        <taxon>Murinae</taxon>
        <taxon>Mus</taxon>
        <taxon>Mus</taxon>
    </lineage>
</organism>
<gene>
    <name type="primary">Gas2l1</name>
</gene>
<dbReference type="EMBL" id="AF508323">
    <property type="protein sequence ID" value="AAM34262.1"/>
    <property type="molecule type" value="mRNA"/>
</dbReference>
<dbReference type="EMBL" id="AF508324">
    <property type="protein sequence ID" value="AAM34263.1"/>
    <property type="molecule type" value="mRNA"/>
</dbReference>
<dbReference type="EMBL" id="AL645522">
    <property type="status" value="NOT_ANNOTATED_CDS"/>
    <property type="molecule type" value="Genomic_DNA"/>
</dbReference>
<dbReference type="EMBL" id="BC031785">
    <property type="protein sequence ID" value="AAH31785.1"/>
    <property type="molecule type" value="mRNA"/>
</dbReference>
<dbReference type="CCDS" id="CCDS36101.1">
    <molecule id="Q8JZP9-1"/>
</dbReference>
<dbReference type="RefSeq" id="NP_001177337.1">
    <molecule id="Q8JZP9-1"/>
    <property type="nucleotide sequence ID" value="NM_001190408.1"/>
</dbReference>
<dbReference type="RefSeq" id="NP_653146.1">
    <molecule id="Q8JZP9-1"/>
    <property type="nucleotide sequence ID" value="NM_144560.3"/>
</dbReference>
<dbReference type="SMR" id="Q8JZP9"/>
<dbReference type="BioGRID" id="219712">
    <property type="interactions" value="1"/>
</dbReference>
<dbReference type="FunCoup" id="Q8JZP9">
    <property type="interactions" value="100"/>
</dbReference>
<dbReference type="STRING" id="10090.ENSMUSP00000050275"/>
<dbReference type="GlyGen" id="Q8JZP9">
    <property type="glycosylation" value="3 sites, 1 O-linked glycan (1 site)"/>
</dbReference>
<dbReference type="iPTMnet" id="Q8JZP9"/>
<dbReference type="PhosphoSitePlus" id="Q8JZP9"/>
<dbReference type="SwissPalm" id="Q8JZP9"/>
<dbReference type="jPOST" id="Q8JZP9"/>
<dbReference type="PaxDb" id="10090-ENSMUSP00000050275"/>
<dbReference type="PeptideAtlas" id="Q8JZP9"/>
<dbReference type="ProteomicsDB" id="271630">
    <molecule id="Q8JZP9-1"/>
</dbReference>
<dbReference type="ProteomicsDB" id="271631">
    <molecule id="Q8JZP9-2"/>
</dbReference>
<dbReference type="Pumba" id="Q8JZP9"/>
<dbReference type="Antibodypedia" id="10326">
    <property type="antibodies" value="201 antibodies from 24 providers"/>
</dbReference>
<dbReference type="Ensembl" id="ENSMUST00000056649.13">
    <molecule id="Q8JZP9-1"/>
    <property type="protein sequence ID" value="ENSMUSP00000050275.7"/>
    <property type="gene ID" value="ENSMUSG00000034201.14"/>
</dbReference>
<dbReference type="Ensembl" id="ENSMUST00000109895.2">
    <molecule id="Q8JZP9-1"/>
    <property type="protein sequence ID" value="ENSMUSP00000105521.2"/>
    <property type="gene ID" value="ENSMUSG00000034201.14"/>
</dbReference>
<dbReference type="GeneID" id="78926"/>
<dbReference type="KEGG" id="mmu:78926"/>
<dbReference type="UCSC" id="uc007hvr.2">
    <molecule id="Q8JZP9-2"/>
    <property type="organism name" value="mouse"/>
</dbReference>
<dbReference type="UCSC" id="uc007hvu.2">
    <molecule id="Q8JZP9-1"/>
    <property type="organism name" value="mouse"/>
</dbReference>
<dbReference type="AGR" id="MGI:1926176"/>
<dbReference type="CTD" id="10634"/>
<dbReference type="MGI" id="MGI:1926176">
    <property type="gene designation" value="Gas2l1"/>
</dbReference>
<dbReference type="VEuPathDB" id="HostDB:ENSMUSG00000034201"/>
<dbReference type="eggNOG" id="KOG0516">
    <property type="taxonomic scope" value="Eukaryota"/>
</dbReference>
<dbReference type="GeneTree" id="ENSGT00940000154849"/>
<dbReference type="HOGENOM" id="CLU_015447_0_0_1"/>
<dbReference type="InParanoid" id="Q8JZP9"/>
<dbReference type="OMA" id="TELGAWH"/>
<dbReference type="OrthoDB" id="206130at2759"/>
<dbReference type="PhylomeDB" id="Q8JZP9"/>
<dbReference type="TreeFam" id="TF323754"/>
<dbReference type="BioGRID-ORCS" id="78926">
    <property type="hits" value="4 hits in 77 CRISPR screens"/>
</dbReference>
<dbReference type="CD-CODE" id="CE726F99">
    <property type="entry name" value="Postsynaptic density"/>
</dbReference>
<dbReference type="ChiTaRS" id="Gas2l1">
    <property type="organism name" value="mouse"/>
</dbReference>
<dbReference type="PRO" id="PR:Q8JZP9"/>
<dbReference type="Proteomes" id="UP000000589">
    <property type="component" value="Chromosome 11"/>
</dbReference>
<dbReference type="RNAct" id="Q8JZP9">
    <property type="molecule type" value="protein"/>
</dbReference>
<dbReference type="Bgee" id="ENSMUSG00000034201">
    <property type="expression patterns" value="Expressed in ear vesicle and 226 other cell types or tissues"/>
</dbReference>
<dbReference type="ExpressionAtlas" id="Q8JZP9">
    <property type="expression patterns" value="baseline and differential"/>
</dbReference>
<dbReference type="GO" id="GO:0005737">
    <property type="term" value="C:cytoplasm"/>
    <property type="evidence" value="ECO:0000314"/>
    <property type="project" value="UniProtKB"/>
</dbReference>
<dbReference type="GO" id="GO:0001725">
    <property type="term" value="C:stress fiber"/>
    <property type="evidence" value="ECO:0007669"/>
    <property type="project" value="UniProtKB-SubCell"/>
</dbReference>
<dbReference type="GO" id="GO:0008093">
    <property type="term" value="F:cytoskeletal anchor activity"/>
    <property type="evidence" value="ECO:0000250"/>
    <property type="project" value="UniProtKB"/>
</dbReference>
<dbReference type="GO" id="GO:0008017">
    <property type="term" value="F:microtubule binding"/>
    <property type="evidence" value="ECO:0000250"/>
    <property type="project" value="UniProtKB"/>
</dbReference>
<dbReference type="GO" id="GO:0009267">
    <property type="term" value="P:cellular response to starvation"/>
    <property type="evidence" value="ECO:0000314"/>
    <property type="project" value="UniProtKB"/>
</dbReference>
<dbReference type="GO" id="GO:0001578">
    <property type="term" value="P:microtubule bundle formation"/>
    <property type="evidence" value="ECO:0000250"/>
    <property type="project" value="UniProtKB"/>
</dbReference>
<dbReference type="GO" id="GO:0007026">
    <property type="term" value="P:negative regulation of microtubule depolymerization"/>
    <property type="evidence" value="ECO:0000250"/>
    <property type="project" value="UniProtKB"/>
</dbReference>
<dbReference type="CDD" id="cd21268">
    <property type="entry name" value="CH_GAS2L1_2"/>
    <property type="match status" value="1"/>
</dbReference>
<dbReference type="FunFam" id="3.30.920.20:FF:000004">
    <property type="entry name" value="GAS2-like protein 1 isoform X1"/>
    <property type="match status" value="1"/>
</dbReference>
<dbReference type="FunFam" id="1.10.418.10:FF:000047">
    <property type="entry name" value="Growth arrest specific 2 like 1"/>
    <property type="match status" value="1"/>
</dbReference>
<dbReference type="Gene3D" id="1.10.418.10">
    <property type="entry name" value="Calponin-like domain"/>
    <property type="match status" value="1"/>
</dbReference>
<dbReference type="Gene3D" id="3.30.920.20">
    <property type="entry name" value="Gas2-like domain"/>
    <property type="match status" value="1"/>
</dbReference>
<dbReference type="InterPro" id="IPR001715">
    <property type="entry name" value="CH_dom"/>
</dbReference>
<dbReference type="InterPro" id="IPR036872">
    <property type="entry name" value="CH_dom_sf"/>
</dbReference>
<dbReference type="InterPro" id="IPR003108">
    <property type="entry name" value="GAR_dom"/>
</dbReference>
<dbReference type="InterPro" id="IPR036534">
    <property type="entry name" value="GAR_dom_sf"/>
</dbReference>
<dbReference type="PANTHER" id="PTHR46756:SF16">
    <property type="entry name" value="GAS2-LIKE PROTEIN 1"/>
    <property type="match status" value="1"/>
</dbReference>
<dbReference type="PANTHER" id="PTHR46756">
    <property type="entry name" value="TRANSGELIN"/>
    <property type="match status" value="1"/>
</dbReference>
<dbReference type="Pfam" id="PF00307">
    <property type="entry name" value="CH"/>
    <property type="match status" value="1"/>
</dbReference>
<dbReference type="Pfam" id="PF02187">
    <property type="entry name" value="GAS2"/>
    <property type="match status" value="1"/>
</dbReference>
<dbReference type="SMART" id="SM00033">
    <property type="entry name" value="CH"/>
    <property type="match status" value="1"/>
</dbReference>
<dbReference type="SMART" id="SM00243">
    <property type="entry name" value="GAS2"/>
    <property type="match status" value="1"/>
</dbReference>
<dbReference type="SUPFAM" id="SSF47576">
    <property type="entry name" value="Calponin-homology domain, CH-domain"/>
    <property type="match status" value="1"/>
</dbReference>
<dbReference type="SUPFAM" id="SSF143575">
    <property type="entry name" value="GAS2 domain-like"/>
    <property type="match status" value="1"/>
</dbReference>
<dbReference type="PROSITE" id="PS50021">
    <property type="entry name" value="CH"/>
    <property type="match status" value="1"/>
</dbReference>
<dbReference type="PROSITE" id="PS51460">
    <property type="entry name" value="GAR"/>
    <property type="match status" value="1"/>
</dbReference>
<accession>Q8JZP9</accession>
<accession>Q5SVG0</accession>
<accession>Q8K573</accession>